<gene>
    <name type="primary">CYP59</name>
    <name type="ordered locus">At1g53720</name>
    <name type="ORF">F22G10.24</name>
</gene>
<reference key="1">
    <citation type="journal article" date="2004" name="Plant Physiol.">
        <title>The Arabidopsis cyclophilin gene family.</title>
        <authorList>
            <person name="Romano P.G.N."/>
            <person name="Horton P."/>
            <person name="Gray J.E."/>
        </authorList>
    </citation>
    <scope>NUCLEOTIDE SEQUENCE [MRNA] (ISOFORM 1)</scope>
    <scope>TISSUE SPECIFICITY</scope>
    <scope>GENE FAMILY</scope>
    <scope>NOMENCLATURE</scope>
</reference>
<reference key="2">
    <citation type="journal article" date="2000" name="Nature">
        <title>Sequence and analysis of chromosome 1 of the plant Arabidopsis thaliana.</title>
        <authorList>
            <person name="Theologis A."/>
            <person name="Ecker J.R."/>
            <person name="Palm C.J."/>
            <person name="Federspiel N.A."/>
            <person name="Kaul S."/>
            <person name="White O."/>
            <person name="Alonso J."/>
            <person name="Altafi H."/>
            <person name="Araujo R."/>
            <person name="Bowman C.L."/>
            <person name="Brooks S.Y."/>
            <person name="Buehler E."/>
            <person name="Chan A."/>
            <person name="Chao Q."/>
            <person name="Chen H."/>
            <person name="Cheuk R.F."/>
            <person name="Chin C.W."/>
            <person name="Chung M.K."/>
            <person name="Conn L."/>
            <person name="Conway A.B."/>
            <person name="Conway A.R."/>
            <person name="Creasy T.H."/>
            <person name="Dewar K."/>
            <person name="Dunn P."/>
            <person name="Etgu P."/>
            <person name="Feldblyum T.V."/>
            <person name="Feng J.-D."/>
            <person name="Fong B."/>
            <person name="Fujii C.Y."/>
            <person name="Gill J.E."/>
            <person name="Goldsmith A.D."/>
            <person name="Haas B."/>
            <person name="Hansen N.F."/>
            <person name="Hughes B."/>
            <person name="Huizar L."/>
            <person name="Hunter J.L."/>
            <person name="Jenkins J."/>
            <person name="Johnson-Hopson C."/>
            <person name="Khan S."/>
            <person name="Khaykin E."/>
            <person name="Kim C.J."/>
            <person name="Koo H.L."/>
            <person name="Kremenetskaia I."/>
            <person name="Kurtz D.B."/>
            <person name="Kwan A."/>
            <person name="Lam B."/>
            <person name="Langin-Hooper S."/>
            <person name="Lee A."/>
            <person name="Lee J.M."/>
            <person name="Lenz C.A."/>
            <person name="Li J.H."/>
            <person name="Li Y.-P."/>
            <person name="Lin X."/>
            <person name="Liu S.X."/>
            <person name="Liu Z.A."/>
            <person name="Luros J.S."/>
            <person name="Maiti R."/>
            <person name="Marziali A."/>
            <person name="Militscher J."/>
            <person name="Miranda M."/>
            <person name="Nguyen M."/>
            <person name="Nierman W.C."/>
            <person name="Osborne B.I."/>
            <person name="Pai G."/>
            <person name="Peterson J."/>
            <person name="Pham P.K."/>
            <person name="Rizzo M."/>
            <person name="Rooney T."/>
            <person name="Rowley D."/>
            <person name="Sakano H."/>
            <person name="Salzberg S.L."/>
            <person name="Schwartz J.R."/>
            <person name="Shinn P."/>
            <person name="Southwick A.M."/>
            <person name="Sun H."/>
            <person name="Tallon L.J."/>
            <person name="Tambunga G."/>
            <person name="Toriumi M.J."/>
            <person name="Town C.D."/>
            <person name="Utterback T."/>
            <person name="Van Aken S."/>
            <person name="Vaysberg M."/>
            <person name="Vysotskaia V.S."/>
            <person name="Walker M."/>
            <person name="Wu D."/>
            <person name="Yu G."/>
            <person name="Fraser C.M."/>
            <person name="Venter J.C."/>
            <person name="Davis R.W."/>
        </authorList>
    </citation>
    <scope>NUCLEOTIDE SEQUENCE [LARGE SCALE GENOMIC DNA]</scope>
    <source>
        <strain>cv. Columbia</strain>
    </source>
</reference>
<reference key="3">
    <citation type="journal article" date="2017" name="Plant J.">
        <title>Araport11: a complete reannotation of the Arabidopsis thaliana reference genome.</title>
        <authorList>
            <person name="Cheng C.Y."/>
            <person name="Krishnakumar V."/>
            <person name="Chan A.P."/>
            <person name="Thibaud-Nissen F."/>
            <person name="Schobel S."/>
            <person name="Town C.D."/>
        </authorList>
    </citation>
    <scope>GENOME REANNOTATION</scope>
    <source>
        <strain>cv. Columbia</strain>
    </source>
</reference>
<reference key="4">
    <citation type="journal article" date="2003" name="Science">
        <title>Empirical analysis of transcriptional activity in the Arabidopsis genome.</title>
        <authorList>
            <person name="Yamada K."/>
            <person name="Lim J."/>
            <person name="Dale J.M."/>
            <person name="Chen H."/>
            <person name="Shinn P."/>
            <person name="Palm C.J."/>
            <person name="Southwick A.M."/>
            <person name="Wu H.C."/>
            <person name="Kim C.J."/>
            <person name="Nguyen M."/>
            <person name="Pham P.K."/>
            <person name="Cheuk R.F."/>
            <person name="Karlin-Newmann G."/>
            <person name="Liu S.X."/>
            <person name="Lam B."/>
            <person name="Sakano H."/>
            <person name="Wu T."/>
            <person name="Yu G."/>
            <person name="Miranda M."/>
            <person name="Quach H.L."/>
            <person name="Tripp M."/>
            <person name="Chang C.H."/>
            <person name="Lee J.M."/>
            <person name="Toriumi M.J."/>
            <person name="Chan M.M."/>
            <person name="Tang C.C."/>
            <person name="Onodera C.S."/>
            <person name="Deng J.M."/>
            <person name="Akiyama K."/>
            <person name="Ansari Y."/>
            <person name="Arakawa T."/>
            <person name="Banh J."/>
            <person name="Banno F."/>
            <person name="Bowser L."/>
            <person name="Brooks S.Y."/>
            <person name="Carninci P."/>
            <person name="Chao Q."/>
            <person name="Choy N."/>
            <person name="Enju A."/>
            <person name="Goldsmith A.D."/>
            <person name="Gurjal M."/>
            <person name="Hansen N.F."/>
            <person name="Hayashizaki Y."/>
            <person name="Johnson-Hopson C."/>
            <person name="Hsuan V.W."/>
            <person name="Iida K."/>
            <person name="Karnes M."/>
            <person name="Khan S."/>
            <person name="Koesema E."/>
            <person name="Ishida J."/>
            <person name="Jiang P.X."/>
            <person name="Jones T."/>
            <person name="Kawai J."/>
            <person name="Kamiya A."/>
            <person name="Meyers C."/>
            <person name="Nakajima M."/>
            <person name="Narusaka M."/>
            <person name="Seki M."/>
            <person name="Sakurai T."/>
            <person name="Satou M."/>
            <person name="Tamse R."/>
            <person name="Vaysberg M."/>
            <person name="Wallender E.K."/>
            <person name="Wong C."/>
            <person name="Yamamura Y."/>
            <person name="Yuan S."/>
            <person name="Shinozaki K."/>
            <person name="Davis R.W."/>
            <person name="Theologis A."/>
            <person name="Ecker J.R."/>
        </authorList>
    </citation>
    <scope>NUCLEOTIDE SEQUENCE [LARGE SCALE MRNA] (ISOFORM 2)</scope>
    <source>
        <strain>cv. Columbia</strain>
    </source>
</reference>
<reference key="5">
    <citation type="journal article" date="2004" name="Plant Physiol.">
        <title>Immunophilins and parvulins. Superfamily of peptidyl prolyl isomerases in Arabidopsis.</title>
        <authorList>
            <person name="He Z."/>
            <person name="Li L."/>
            <person name="Luan S."/>
        </authorList>
    </citation>
    <scope>GENE FAMILY</scope>
    <scope>NOMENCLATURE</scope>
    <scope>TISSUE SPECIFICITY</scope>
    <source>
        <strain>cv. Columbia</strain>
    </source>
</reference>
<reference key="6">
    <citation type="journal article" date="2006" name="RNA">
        <title>AtCyp59 is a multidomain cyclophilin from Arabidopsis thaliana that interacts with SR proteins and the C-terminal domain of the RNA polymerase II.</title>
        <authorList>
            <person name="Gullerova M."/>
            <person name="Barta A."/>
            <person name="Lorkovic Z.J."/>
        </authorList>
    </citation>
    <scope>FUNCTION</scope>
    <scope>TISSUE SPECIFICITY</scope>
    <scope>INTERACTION WITH NRPB1; SCL28; SCL30; SCL30A; SCL33; SC35; SR30; SR34; RSZ21; RS2Z33; RS31 AND RS40</scope>
    <scope>SUBCELLULAR LOCATION</scope>
    <scope>RNA-BINDING</scope>
</reference>
<reference key="7">
    <citation type="journal article" date="2013" name="Mol. Cell. Proteomics">
        <title>Identification of BZR1-interacting proteins as potential components of the brassinosteroid signaling pathway in Arabidopsis through tandem affinity purification.</title>
        <authorList>
            <person name="Wang C."/>
            <person name="Shang J.X."/>
            <person name="Chen Q.X."/>
            <person name="Oses-Prieto J.A."/>
            <person name="Bai M.Y."/>
            <person name="Yang Y."/>
            <person name="Yuan M."/>
            <person name="Zhang Y.L."/>
            <person name="Mu C.C."/>
            <person name="Deng Z."/>
            <person name="Wei C.Q."/>
            <person name="Burlingame A.L."/>
            <person name="Wang Z.Y."/>
            <person name="Sun Y."/>
        </authorList>
    </citation>
    <scope>IDENTIFICATION IN THE BZR1 COMPLEX</scope>
</reference>
<reference key="8">
    <citation type="journal article" date="2013" name="Nucleic Acids Res.">
        <title>Identification of RNA targets for the nuclear multidomain cyclophilin atCyp59 and their effect on PPIase activity.</title>
        <authorList>
            <person name="Bannikova O."/>
            <person name="Zywicki M."/>
            <person name="Marquez Y."/>
            <person name="Skrahina T."/>
            <person name="Kalyna M."/>
            <person name="Barta A."/>
        </authorList>
    </citation>
    <scope>FUNCTION</scope>
</reference>
<proteinExistence type="evidence at protein level"/>
<sequence>MSVLIVTSLGDIVIDLHSDKCPLTCKNFLKLCKIKYYNGCLFHTVQKDFTAQTGDPTGTGAGGDSIYKFLYGEQARFYKDEIHLDLKHSKTGTVAMASGGENLNASQFYFTLRDDLDYLDGKHTVFGQIAEGFDTLTRINEAYVDPKNRPYKNIRIKHTHILDDPFDDPPQLAEMMPDASPEGKPKEEVKDDVRLEDDWVPMDEELGAQELEEVIREKAAHSSAVVLESIGDIPEAEVKPPDNVLFVCKLNPVTEDEDLHTIFSRFGTVVSADVIRDFKTGDSLCYAFIEFENKESCEQAYFKMDNALIDDRRIHVDFSQSVSKLWSQFRQKDSQKGKGNGCFKCGSTDHIAKDCVGGPSSKFIVKDQNRQHGGGEGYEMVFEGDVHETPKHNSHERERSEKIQRRSPHGNGEGKRQHRDERDDGRRQHDREDARELERKHRERKERESREDEDRRRRRRREESRDKESRRERDEDDHRSHRDYKERRRERDDRHGREARHERRDR</sequence>
<name>CYP59_ARATH</name>
<accession>Q6Q151</accession>
<accession>Q93YQ8</accession>
<accession>Q9C8M7</accession>
<keyword id="KW-0025">Alternative splicing</keyword>
<keyword id="KW-0413">Isomerase</keyword>
<keyword id="KW-0479">Metal-binding</keyword>
<keyword id="KW-0539">Nucleus</keyword>
<keyword id="KW-1185">Reference proteome</keyword>
<keyword id="KW-0694">RNA-binding</keyword>
<keyword id="KW-0697">Rotamase</keyword>
<keyword id="KW-0862">Zinc</keyword>
<keyword id="KW-0863">Zinc-finger</keyword>
<dbReference type="EC" id="5.2.1.8"/>
<dbReference type="EMBL" id="AY568526">
    <property type="protein sequence ID" value="AAS75309.1"/>
    <property type="molecule type" value="mRNA"/>
</dbReference>
<dbReference type="EMBL" id="AC024260">
    <property type="protein sequence ID" value="AAG51976.1"/>
    <property type="status" value="ALT_SEQ"/>
    <property type="molecule type" value="Genomic_DNA"/>
</dbReference>
<dbReference type="EMBL" id="CP002684">
    <property type="protein sequence ID" value="AEE32989.1"/>
    <property type="molecule type" value="Genomic_DNA"/>
</dbReference>
<dbReference type="EMBL" id="AY059824">
    <property type="protein sequence ID" value="AAL24306.1"/>
    <property type="molecule type" value="mRNA"/>
</dbReference>
<dbReference type="PIR" id="E96577">
    <property type="entry name" value="E96577"/>
</dbReference>
<dbReference type="RefSeq" id="NP_175776.2">
    <molecule id="Q6Q151-1"/>
    <property type="nucleotide sequence ID" value="NM_104250.5"/>
</dbReference>
<dbReference type="SMR" id="Q6Q151"/>
<dbReference type="BioGRID" id="27035">
    <property type="interactions" value="13"/>
</dbReference>
<dbReference type="FunCoup" id="Q6Q151">
    <property type="interactions" value="4219"/>
</dbReference>
<dbReference type="IntAct" id="Q6Q151">
    <property type="interactions" value="14"/>
</dbReference>
<dbReference type="STRING" id="3702.Q6Q151"/>
<dbReference type="iPTMnet" id="Q6Q151"/>
<dbReference type="PaxDb" id="3702-AT1G53720.1"/>
<dbReference type="ProteomicsDB" id="222749">
    <molecule id="Q6Q151-1"/>
</dbReference>
<dbReference type="EnsemblPlants" id="AT1G53720.1">
    <molecule id="Q6Q151-1"/>
    <property type="protein sequence ID" value="AT1G53720.1"/>
    <property type="gene ID" value="AT1G53720"/>
</dbReference>
<dbReference type="GeneID" id="841810"/>
<dbReference type="Gramene" id="AT1G53720.1">
    <molecule id="Q6Q151-1"/>
    <property type="protein sequence ID" value="AT1G53720.1"/>
    <property type="gene ID" value="AT1G53720"/>
</dbReference>
<dbReference type="KEGG" id="ath:AT1G53720"/>
<dbReference type="Araport" id="AT1G53720"/>
<dbReference type="TAIR" id="AT1G53720">
    <property type="gene designation" value="CYP59"/>
</dbReference>
<dbReference type="eggNOG" id="KOG0415">
    <property type="taxonomic scope" value="Eukaryota"/>
</dbReference>
<dbReference type="HOGENOM" id="CLU_018791_3_0_1"/>
<dbReference type="InParanoid" id="Q6Q151"/>
<dbReference type="OMA" id="DRDYSKH"/>
<dbReference type="PhylomeDB" id="Q6Q151"/>
<dbReference type="PRO" id="PR:Q6Q151"/>
<dbReference type="Proteomes" id="UP000006548">
    <property type="component" value="Chromosome 1"/>
</dbReference>
<dbReference type="ExpressionAtlas" id="Q6Q151">
    <property type="expression patterns" value="baseline and differential"/>
</dbReference>
<dbReference type="GO" id="GO:0005634">
    <property type="term" value="C:nucleus"/>
    <property type="evidence" value="ECO:0000314"/>
    <property type="project" value="TAIR"/>
</dbReference>
<dbReference type="GO" id="GO:0003755">
    <property type="term" value="F:peptidyl-prolyl cis-trans isomerase activity"/>
    <property type="evidence" value="ECO:0007669"/>
    <property type="project" value="UniProtKB-KW"/>
</dbReference>
<dbReference type="GO" id="GO:0003723">
    <property type="term" value="F:RNA binding"/>
    <property type="evidence" value="ECO:0000314"/>
    <property type="project" value="TAIR"/>
</dbReference>
<dbReference type="GO" id="GO:0008270">
    <property type="term" value="F:zinc ion binding"/>
    <property type="evidence" value="ECO:0007669"/>
    <property type="project" value="UniProtKB-KW"/>
</dbReference>
<dbReference type="CDD" id="cd01921">
    <property type="entry name" value="cyclophilin_RRM"/>
    <property type="match status" value="1"/>
</dbReference>
<dbReference type="CDD" id="cd12235">
    <property type="entry name" value="RRM_PPIL4"/>
    <property type="match status" value="1"/>
</dbReference>
<dbReference type="FunFam" id="2.40.100.10:FF:000015">
    <property type="entry name" value="Peptidyl-prolyl cis-trans isomerase"/>
    <property type="match status" value="1"/>
</dbReference>
<dbReference type="FunFam" id="3.30.70.330:FF:000455">
    <property type="entry name" value="Peptidyl-prolyl cis-trans isomerase"/>
    <property type="match status" value="1"/>
</dbReference>
<dbReference type="Gene3D" id="3.30.70.330">
    <property type="match status" value="1"/>
</dbReference>
<dbReference type="Gene3D" id="2.40.100.10">
    <property type="entry name" value="Cyclophilin-like"/>
    <property type="match status" value="1"/>
</dbReference>
<dbReference type="Gene3D" id="4.10.60.10">
    <property type="entry name" value="Zinc finger, CCHC-type"/>
    <property type="match status" value="1"/>
</dbReference>
<dbReference type="InterPro" id="IPR035542">
    <property type="entry name" value="CRIP"/>
</dbReference>
<dbReference type="InterPro" id="IPR029000">
    <property type="entry name" value="Cyclophilin-like_dom_sf"/>
</dbReference>
<dbReference type="InterPro" id="IPR002130">
    <property type="entry name" value="Cyclophilin-type_PPIase_dom"/>
</dbReference>
<dbReference type="InterPro" id="IPR035538">
    <property type="entry name" value="Cyclophilin_PPIL4"/>
</dbReference>
<dbReference type="InterPro" id="IPR012677">
    <property type="entry name" value="Nucleotide-bd_a/b_plait_sf"/>
</dbReference>
<dbReference type="InterPro" id="IPR035979">
    <property type="entry name" value="RBD_domain_sf"/>
</dbReference>
<dbReference type="InterPro" id="IPR000504">
    <property type="entry name" value="RRM_dom"/>
</dbReference>
<dbReference type="InterPro" id="IPR001878">
    <property type="entry name" value="Znf_CCHC"/>
</dbReference>
<dbReference type="PANTHER" id="PTHR45843">
    <property type="entry name" value="PEPTIDYL-PROLYL CIS-TRANS ISOMERASE-LIKE 4"/>
    <property type="match status" value="1"/>
</dbReference>
<dbReference type="PANTHER" id="PTHR45843:SF1">
    <property type="entry name" value="PEPTIDYL-PROLYL CIS-TRANS ISOMERASE-LIKE 4"/>
    <property type="match status" value="1"/>
</dbReference>
<dbReference type="Pfam" id="PF00160">
    <property type="entry name" value="Pro_isomerase"/>
    <property type="match status" value="1"/>
</dbReference>
<dbReference type="Pfam" id="PF00076">
    <property type="entry name" value="RRM_1"/>
    <property type="match status" value="1"/>
</dbReference>
<dbReference type="Pfam" id="PF00098">
    <property type="entry name" value="zf-CCHC"/>
    <property type="match status" value="1"/>
</dbReference>
<dbReference type="PRINTS" id="PR00153">
    <property type="entry name" value="CSAPPISMRASE"/>
</dbReference>
<dbReference type="SMART" id="SM00360">
    <property type="entry name" value="RRM"/>
    <property type="match status" value="1"/>
</dbReference>
<dbReference type="SMART" id="SM00343">
    <property type="entry name" value="ZnF_C2HC"/>
    <property type="match status" value="1"/>
</dbReference>
<dbReference type="SUPFAM" id="SSF50891">
    <property type="entry name" value="Cyclophilin-like"/>
    <property type="match status" value="1"/>
</dbReference>
<dbReference type="SUPFAM" id="SSF54928">
    <property type="entry name" value="RNA-binding domain, RBD"/>
    <property type="match status" value="1"/>
</dbReference>
<dbReference type="PROSITE" id="PS50072">
    <property type="entry name" value="CSA_PPIASE_2"/>
    <property type="match status" value="1"/>
</dbReference>
<dbReference type="PROSITE" id="PS50102">
    <property type="entry name" value="RRM"/>
    <property type="match status" value="1"/>
</dbReference>
<dbReference type="PROSITE" id="PS50158">
    <property type="entry name" value="ZF_CCHC"/>
    <property type="match status" value="1"/>
</dbReference>
<comment type="function">
    <text evidence="7 8">PPIases accelerate the folding of proteins. It catalyzes the cis-trans isomerization of proline imidic peptide bonds in oligopeptides. Influences somehow regulation of RNA pol II (CTD) phosphorylation. Binds RNA with preferences for GC-rich sequences. Probably involved in activities connecting transcription and pre-mRNA processing. Involved in brassinostroid response.</text>
</comment>
<comment type="catalytic activity">
    <reaction>
        <text>[protein]-peptidylproline (omega=180) = [protein]-peptidylproline (omega=0)</text>
        <dbReference type="Rhea" id="RHEA:16237"/>
        <dbReference type="Rhea" id="RHEA-COMP:10747"/>
        <dbReference type="Rhea" id="RHEA-COMP:10748"/>
        <dbReference type="ChEBI" id="CHEBI:83833"/>
        <dbReference type="ChEBI" id="CHEBI:83834"/>
        <dbReference type="EC" id="5.2.1.8"/>
    </reaction>
</comment>
<comment type="subunit">
    <text evidence="7 9">Component of the BZR1 complex. Interacts with NRPB1 (via CTD domain), SCL28, SCL30, SCL30A, SCL33, SC35, SR30, SR34, RSZ21, RS2Z33, RS31 and RS40.</text>
</comment>
<comment type="interaction">
    <interactant intactId="EBI-1625989">
        <id>Q6Q151</id>
    </interactant>
    <interactant intactId="EBI-1540537">
        <id>P18616</id>
        <label>NRPB1</label>
    </interactant>
    <organismsDiffer>false</organismsDiffer>
    <experiments>3</experiments>
</comment>
<comment type="interaction">
    <interactant intactId="EBI-1625989">
        <id>Q6Q151</id>
    </interactant>
    <interactant intactId="EBI-927103">
        <id>Q9SEU4</id>
        <label>SCL33</label>
    </interactant>
    <organismsDiffer>false</organismsDiffer>
    <experiments>3</experiments>
</comment>
<comment type="subcellular location">
    <subcellularLocation>
        <location evidence="7">Nucleus</location>
    </subcellularLocation>
    <text>Shows a punctuate localization pattern distinct from the nuclear speckles.</text>
</comment>
<comment type="alternative products">
    <event type="alternative splicing"/>
    <isoform>
        <id>Q6Q151-1</id>
        <name>1</name>
        <sequence type="displayed"/>
    </isoform>
    <isoform>
        <id>Q6Q151-2</id>
        <name>2</name>
        <sequence type="described" ref="VSP_055001"/>
    </isoform>
</comment>
<comment type="tissue specificity">
    <text evidence="5 6 7">Ubiquitous.</text>
</comment>
<comment type="similarity">
    <text evidence="11">Belongs to the cyclophilin-type PPIase family.</text>
</comment>
<comment type="sequence caution" evidence="11">
    <conflict type="erroneous gene model prediction">
        <sequence resource="EMBL-CDS" id="AAG51976"/>
    </conflict>
</comment>
<organism>
    <name type="scientific">Arabidopsis thaliana</name>
    <name type="common">Mouse-ear cress</name>
    <dbReference type="NCBI Taxonomy" id="3702"/>
    <lineage>
        <taxon>Eukaryota</taxon>
        <taxon>Viridiplantae</taxon>
        <taxon>Streptophyta</taxon>
        <taxon>Embryophyta</taxon>
        <taxon>Tracheophyta</taxon>
        <taxon>Spermatophyta</taxon>
        <taxon>Magnoliopsida</taxon>
        <taxon>eudicotyledons</taxon>
        <taxon>Gunneridae</taxon>
        <taxon>Pentapetalae</taxon>
        <taxon>rosids</taxon>
        <taxon>malvids</taxon>
        <taxon>Brassicales</taxon>
        <taxon>Brassicaceae</taxon>
        <taxon>Camelineae</taxon>
        <taxon>Arabidopsis</taxon>
    </lineage>
</organism>
<evidence type="ECO:0000255" key="1">
    <source>
        <dbReference type="PROSITE-ProRule" id="PRU00047"/>
    </source>
</evidence>
<evidence type="ECO:0000255" key="2">
    <source>
        <dbReference type="PROSITE-ProRule" id="PRU00156"/>
    </source>
</evidence>
<evidence type="ECO:0000255" key="3">
    <source>
        <dbReference type="PROSITE-ProRule" id="PRU00176"/>
    </source>
</evidence>
<evidence type="ECO:0000256" key="4">
    <source>
        <dbReference type="SAM" id="MobiDB-lite"/>
    </source>
</evidence>
<evidence type="ECO:0000269" key="5">
    <source>
    </source>
</evidence>
<evidence type="ECO:0000269" key="6">
    <source>
    </source>
</evidence>
<evidence type="ECO:0000269" key="7">
    <source>
    </source>
</evidence>
<evidence type="ECO:0000269" key="8">
    <source>
    </source>
</evidence>
<evidence type="ECO:0000269" key="9">
    <source>
    </source>
</evidence>
<evidence type="ECO:0000303" key="10">
    <source>
    </source>
</evidence>
<evidence type="ECO:0000305" key="11"/>
<protein>
    <recommendedName>
        <fullName>Peptidyl-prolyl cis-trans isomerase CYP59</fullName>
        <shortName>AtCYP59</shortName>
        <shortName>PPIase CYP59</shortName>
        <ecNumber>5.2.1.8</ecNumber>
    </recommendedName>
    <alternativeName>
        <fullName>Cyclophilin-59</fullName>
    </alternativeName>
</protein>
<feature type="chain" id="PRO_0000429607" description="Peptidyl-prolyl cis-trans isomerase CYP59">
    <location>
        <begin position="1"/>
        <end position="506"/>
    </location>
</feature>
<feature type="domain" description="PPIase cyclophilin-type" evidence="2">
    <location>
        <begin position="1"/>
        <end position="161"/>
    </location>
</feature>
<feature type="domain" description="RRM" evidence="3">
    <location>
        <begin position="243"/>
        <end position="321"/>
    </location>
</feature>
<feature type="zinc finger region" description="CCHC-type" evidence="1">
    <location>
        <begin position="341"/>
        <end position="357"/>
    </location>
</feature>
<feature type="region of interest" description="Disordered" evidence="4">
    <location>
        <begin position="388"/>
        <end position="506"/>
    </location>
</feature>
<feature type="compositionally biased region" description="Basic and acidic residues" evidence="4">
    <location>
        <begin position="388"/>
        <end position="404"/>
    </location>
</feature>
<feature type="compositionally biased region" description="Basic and acidic residues" evidence="4">
    <location>
        <begin position="412"/>
        <end position="506"/>
    </location>
</feature>
<feature type="splice variant" id="VSP_055001" description="In isoform 2." evidence="10">
    <original>HRERKERESREDEDRRRRRRREESRDKESRRERDEDDHRSHRDYKERRRERDDRHGREARHERRDR</original>
    <variation>L</variation>
    <location>
        <begin position="441"/>
        <end position="506"/>
    </location>
</feature>